<proteinExistence type="inferred from homology"/>
<gene>
    <name evidence="1" type="primary">alaS</name>
    <name type="ordered locus">STY2948</name>
    <name type="ordered locus">t2728</name>
</gene>
<evidence type="ECO:0000255" key="1">
    <source>
        <dbReference type="HAMAP-Rule" id="MF_00036"/>
    </source>
</evidence>
<name>SYA_SALTI</name>
<dbReference type="EC" id="6.1.1.7" evidence="1"/>
<dbReference type="EMBL" id="AL513382">
    <property type="protein sequence ID" value="CAD05933.1"/>
    <property type="molecule type" value="Genomic_DNA"/>
</dbReference>
<dbReference type="EMBL" id="AE014613">
    <property type="protein sequence ID" value="AAO70289.1"/>
    <property type="molecule type" value="Genomic_DNA"/>
</dbReference>
<dbReference type="RefSeq" id="NP_457220.1">
    <property type="nucleotide sequence ID" value="NC_003198.1"/>
</dbReference>
<dbReference type="RefSeq" id="WP_000047238.1">
    <property type="nucleotide sequence ID" value="NZ_WSUR01000005.1"/>
</dbReference>
<dbReference type="SMR" id="Q8Z4D5"/>
<dbReference type="STRING" id="220341.gene:17586843"/>
<dbReference type="KEGG" id="stt:t2728"/>
<dbReference type="KEGG" id="sty:STY2948"/>
<dbReference type="PATRIC" id="fig|220341.7.peg.3003"/>
<dbReference type="eggNOG" id="COG0013">
    <property type="taxonomic scope" value="Bacteria"/>
</dbReference>
<dbReference type="HOGENOM" id="CLU_004485_1_1_6"/>
<dbReference type="OMA" id="NKKDNFW"/>
<dbReference type="OrthoDB" id="9803884at2"/>
<dbReference type="Proteomes" id="UP000000541">
    <property type="component" value="Chromosome"/>
</dbReference>
<dbReference type="Proteomes" id="UP000002670">
    <property type="component" value="Chromosome"/>
</dbReference>
<dbReference type="GO" id="GO:0005829">
    <property type="term" value="C:cytosol"/>
    <property type="evidence" value="ECO:0007669"/>
    <property type="project" value="TreeGrafter"/>
</dbReference>
<dbReference type="GO" id="GO:0004813">
    <property type="term" value="F:alanine-tRNA ligase activity"/>
    <property type="evidence" value="ECO:0007669"/>
    <property type="project" value="UniProtKB-UniRule"/>
</dbReference>
<dbReference type="GO" id="GO:0002161">
    <property type="term" value="F:aminoacyl-tRNA deacylase activity"/>
    <property type="evidence" value="ECO:0007669"/>
    <property type="project" value="TreeGrafter"/>
</dbReference>
<dbReference type="GO" id="GO:0005524">
    <property type="term" value="F:ATP binding"/>
    <property type="evidence" value="ECO:0007669"/>
    <property type="project" value="UniProtKB-UniRule"/>
</dbReference>
<dbReference type="GO" id="GO:0000049">
    <property type="term" value="F:tRNA binding"/>
    <property type="evidence" value="ECO:0007669"/>
    <property type="project" value="UniProtKB-KW"/>
</dbReference>
<dbReference type="GO" id="GO:0008270">
    <property type="term" value="F:zinc ion binding"/>
    <property type="evidence" value="ECO:0007669"/>
    <property type="project" value="UniProtKB-UniRule"/>
</dbReference>
<dbReference type="GO" id="GO:0006419">
    <property type="term" value="P:alanyl-tRNA aminoacylation"/>
    <property type="evidence" value="ECO:0007669"/>
    <property type="project" value="UniProtKB-UniRule"/>
</dbReference>
<dbReference type="GO" id="GO:0045892">
    <property type="term" value="P:negative regulation of DNA-templated transcription"/>
    <property type="evidence" value="ECO:0007669"/>
    <property type="project" value="TreeGrafter"/>
</dbReference>
<dbReference type="CDD" id="cd00673">
    <property type="entry name" value="AlaRS_core"/>
    <property type="match status" value="1"/>
</dbReference>
<dbReference type="FunFam" id="2.40.30.130:FF:000001">
    <property type="entry name" value="Alanine--tRNA ligase"/>
    <property type="match status" value="1"/>
</dbReference>
<dbReference type="FunFam" id="3.10.310.40:FF:000001">
    <property type="entry name" value="Alanine--tRNA ligase"/>
    <property type="match status" value="1"/>
</dbReference>
<dbReference type="FunFam" id="3.30.54.20:FF:000001">
    <property type="entry name" value="Alanine--tRNA ligase"/>
    <property type="match status" value="1"/>
</dbReference>
<dbReference type="FunFam" id="3.30.930.10:FF:000004">
    <property type="entry name" value="Alanine--tRNA ligase"/>
    <property type="match status" value="1"/>
</dbReference>
<dbReference type="FunFam" id="3.30.980.10:FF:000004">
    <property type="entry name" value="Alanine--tRNA ligase, cytoplasmic"/>
    <property type="match status" value="1"/>
</dbReference>
<dbReference type="Gene3D" id="2.40.30.130">
    <property type="match status" value="1"/>
</dbReference>
<dbReference type="Gene3D" id="3.10.310.40">
    <property type="match status" value="1"/>
</dbReference>
<dbReference type="Gene3D" id="3.30.54.20">
    <property type="match status" value="1"/>
</dbReference>
<dbReference type="Gene3D" id="6.10.250.550">
    <property type="match status" value="1"/>
</dbReference>
<dbReference type="Gene3D" id="3.30.930.10">
    <property type="entry name" value="Bira Bifunctional Protein, Domain 2"/>
    <property type="match status" value="1"/>
</dbReference>
<dbReference type="Gene3D" id="3.30.980.10">
    <property type="entry name" value="Threonyl-trna Synthetase, Chain A, domain 2"/>
    <property type="match status" value="1"/>
</dbReference>
<dbReference type="HAMAP" id="MF_00036_B">
    <property type="entry name" value="Ala_tRNA_synth_B"/>
    <property type="match status" value="1"/>
</dbReference>
<dbReference type="InterPro" id="IPR045864">
    <property type="entry name" value="aa-tRNA-synth_II/BPL/LPL"/>
</dbReference>
<dbReference type="InterPro" id="IPR002318">
    <property type="entry name" value="Ala-tRNA-lgiase_IIc"/>
</dbReference>
<dbReference type="InterPro" id="IPR018162">
    <property type="entry name" value="Ala-tRNA-ligase_IIc_anticod-bd"/>
</dbReference>
<dbReference type="InterPro" id="IPR018165">
    <property type="entry name" value="Ala-tRNA-synth_IIc_core"/>
</dbReference>
<dbReference type="InterPro" id="IPR018164">
    <property type="entry name" value="Ala-tRNA-synth_IIc_N"/>
</dbReference>
<dbReference type="InterPro" id="IPR050058">
    <property type="entry name" value="Ala-tRNA_ligase"/>
</dbReference>
<dbReference type="InterPro" id="IPR023033">
    <property type="entry name" value="Ala_tRNA_ligase_euk/bac"/>
</dbReference>
<dbReference type="InterPro" id="IPR003156">
    <property type="entry name" value="DHHA1_dom"/>
</dbReference>
<dbReference type="InterPro" id="IPR018163">
    <property type="entry name" value="Thr/Ala-tRNA-synth_IIc_edit"/>
</dbReference>
<dbReference type="InterPro" id="IPR009000">
    <property type="entry name" value="Transl_B-barrel_sf"/>
</dbReference>
<dbReference type="InterPro" id="IPR012947">
    <property type="entry name" value="tRNA_SAD"/>
</dbReference>
<dbReference type="NCBIfam" id="TIGR00344">
    <property type="entry name" value="alaS"/>
    <property type="match status" value="1"/>
</dbReference>
<dbReference type="PANTHER" id="PTHR11777:SF9">
    <property type="entry name" value="ALANINE--TRNA LIGASE, CYTOPLASMIC"/>
    <property type="match status" value="1"/>
</dbReference>
<dbReference type="PANTHER" id="PTHR11777">
    <property type="entry name" value="ALANYL-TRNA SYNTHETASE"/>
    <property type="match status" value="1"/>
</dbReference>
<dbReference type="Pfam" id="PF02272">
    <property type="entry name" value="DHHA1"/>
    <property type="match status" value="1"/>
</dbReference>
<dbReference type="Pfam" id="PF01411">
    <property type="entry name" value="tRNA-synt_2c"/>
    <property type="match status" value="1"/>
</dbReference>
<dbReference type="Pfam" id="PF07973">
    <property type="entry name" value="tRNA_SAD"/>
    <property type="match status" value="1"/>
</dbReference>
<dbReference type="PRINTS" id="PR00980">
    <property type="entry name" value="TRNASYNTHALA"/>
</dbReference>
<dbReference type="SMART" id="SM00863">
    <property type="entry name" value="tRNA_SAD"/>
    <property type="match status" value="1"/>
</dbReference>
<dbReference type="SUPFAM" id="SSF55681">
    <property type="entry name" value="Class II aaRS and biotin synthetases"/>
    <property type="match status" value="1"/>
</dbReference>
<dbReference type="SUPFAM" id="SSF101353">
    <property type="entry name" value="Putative anticodon-binding domain of alanyl-tRNA synthetase (AlaRS)"/>
    <property type="match status" value="1"/>
</dbReference>
<dbReference type="SUPFAM" id="SSF55186">
    <property type="entry name" value="ThrRS/AlaRS common domain"/>
    <property type="match status" value="1"/>
</dbReference>
<dbReference type="SUPFAM" id="SSF50447">
    <property type="entry name" value="Translation proteins"/>
    <property type="match status" value="1"/>
</dbReference>
<dbReference type="PROSITE" id="PS50860">
    <property type="entry name" value="AA_TRNA_LIGASE_II_ALA"/>
    <property type="match status" value="1"/>
</dbReference>
<organism>
    <name type="scientific">Salmonella typhi</name>
    <dbReference type="NCBI Taxonomy" id="90370"/>
    <lineage>
        <taxon>Bacteria</taxon>
        <taxon>Pseudomonadati</taxon>
        <taxon>Pseudomonadota</taxon>
        <taxon>Gammaproteobacteria</taxon>
        <taxon>Enterobacterales</taxon>
        <taxon>Enterobacteriaceae</taxon>
        <taxon>Salmonella</taxon>
    </lineage>
</organism>
<feature type="chain" id="PRO_0000075196" description="Alanine--tRNA ligase">
    <location>
        <begin position="1"/>
        <end position="876"/>
    </location>
</feature>
<feature type="binding site" evidence="1">
    <location>
        <position position="564"/>
    </location>
    <ligand>
        <name>Zn(2+)</name>
        <dbReference type="ChEBI" id="CHEBI:29105"/>
    </ligand>
</feature>
<feature type="binding site" evidence="1">
    <location>
        <position position="568"/>
    </location>
    <ligand>
        <name>Zn(2+)</name>
        <dbReference type="ChEBI" id="CHEBI:29105"/>
    </ligand>
</feature>
<feature type="binding site" evidence="1">
    <location>
        <position position="666"/>
    </location>
    <ligand>
        <name>Zn(2+)</name>
        <dbReference type="ChEBI" id="CHEBI:29105"/>
    </ligand>
</feature>
<feature type="binding site" evidence="1">
    <location>
        <position position="670"/>
    </location>
    <ligand>
        <name>Zn(2+)</name>
        <dbReference type="ChEBI" id="CHEBI:29105"/>
    </ligand>
</feature>
<keyword id="KW-0030">Aminoacyl-tRNA synthetase</keyword>
<keyword id="KW-0067">ATP-binding</keyword>
<keyword id="KW-0963">Cytoplasm</keyword>
<keyword id="KW-0436">Ligase</keyword>
<keyword id="KW-0479">Metal-binding</keyword>
<keyword id="KW-0547">Nucleotide-binding</keyword>
<keyword id="KW-0648">Protein biosynthesis</keyword>
<keyword id="KW-0694">RNA-binding</keyword>
<keyword id="KW-0820">tRNA-binding</keyword>
<keyword id="KW-0862">Zinc</keyword>
<reference key="1">
    <citation type="journal article" date="2001" name="Nature">
        <title>Complete genome sequence of a multiple drug resistant Salmonella enterica serovar Typhi CT18.</title>
        <authorList>
            <person name="Parkhill J."/>
            <person name="Dougan G."/>
            <person name="James K.D."/>
            <person name="Thomson N.R."/>
            <person name="Pickard D."/>
            <person name="Wain J."/>
            <person name="Churcher C.M."/>
            <person name="Mungall K.L."/>
            <person name="Bentley S.D."/>
            <person name="Holden M.T.G."/>
            <person name="Sebaihia M."/>
            <person name="Baker S."/>
            <person name="Basham D."/>
            <person name="Brooks K."/>
            <person name="Chillingworth T."/>
            <person name="Connerton P."/>
            <person name="Cronin A."/>
            <person name="Davis P."/>
            <person name="Davies R.M."/>
            <person name="Dowd L."/>
            <person name="White N."/>
            <person name="Farrar J."/>
            <person name="Feltwell T."/>
            <person name="Hamlin N."/>
            <person name="Haque A."/>
            <person name="Hien T.T."/>
            <person name="Holroyd S."/>
            <person name="Jagels K."/>
            <person name="Krogh A."/>
            <person name="Larsen T.S."/>
            <person name="Leather S."/>
            <person name="Moule S."/>
            <person name="O'Gaora P."/>
            <person name="Parry C."/>
            <person name="Quail M.A."/>
            <person name="Rutherford K.M."/>
            <person name="Simmonds M."/>
            <person name="Skelton J."/>
            <person name="Stevens K."/>
            <person name="Whitehead S."/>
            <person name="Barrell B.G."/>
        </authorList>
    </citation>
    <scope>NUCLEOTIDE SEQUENCE [LARGE SCALE GENOMIC DNA]</scope>
    <source>
        <strain>CT18</strain>
    </source>
</reference>
<reference key="2">
    <citation type="journal article" date="2003" name="J. Bacteriol.">
        <title>Comparative genomics of Salmonella enterica serovar Typhi strains Ty2 and CT18.</title>
        <authorList>
            <person name="Deng W."/>
            <person name="Liou S.-R."/>
            <person name="Plunkett G. III"/>
            <person name="Mayhew G.F."/>
            <person name="Rose D.J."/>
            <person name="Burland V."/>
            <person name="Kodoyianni V."/>
            <person name="Schwartz D.C."/>
            <person name="Blattner F.R."/>
        </authorList>
    </citation>
    <scope>NUCLEOTIDE SEQUENCE [LARGE SCALE GENOMIC DNA]</scope>
    <source>
        <strain>ATCC 700931 / Ty2</strain>
    </source>
</reference>
<comment type="function">
    <text evidence="1">Catalyzes the attachment of alanine to tRNA(Ala) in a two-step reaction: alanine is first activated by ATP to form Ala-AMP and then transferred to the acceptor end of tRNA(Ala). Also edits incorrectly charged Ser-tRNA(Ala) and Gly-tRNA(Ala) via its editing domain.</text>
</comment>
<comment type="catalytic activity">
    <reaction evidence="1">
        <text>tRNA(Ala) + L-alanine + ATP = L-alanyl-tRNA(Ala) + AMP + diphosphate</text>
        <dbReference type="Rhea" id="RHEA:12540"/>
        <dbReference type="Rhea" id="RHEA-COMP:9657"/>
        <dbReference type="Rhea" id="RHEA-COMP:9923"/>
        <dbReference type="ChEBI" id="CHEBI:30616"/>
        <dbReference type="ChEBI" id="CHEBI:33019"/>
        <dbReference type="ChEBI" id="CHEBI:57972"/>
        <dbReference type="ChEBI" id="CHEBI:78442"/>
        <dbReference type="ChEBI" id="CHEBI:78497"/>
        <dbReference type="ChEBI" id="CHEBI:456215"/>
        <dbReference type="EC" id="6.1.1.7"/>
    </reaction>
</comment>
<comment type="cofactor">
    <cofactor evidence="1">
        <name>Zn(2+)</name>
        <dbReference type="ChEBI" id="CHEBI:29105"/>
    </cofactor>
    <text evidence="1">Binds 1 zinc ion per subunit.</text>
</comment>
<comment type="subunit">
    <text evidence="1">Homotetramer.</text>
</comment>
<comment type="subcellular location">
    <subcellularLocation>
        <location evidence="1">Cytoplasm</location>
    </subcellularLocation>
</comment>
<comment type="domain">
    <text evidence="1">Consists of three domains; the N-terminal catalytic domain, the editing domain and the C-terminal C-Ala domain. The editing domain removes incorrectly charged amino acids, while the C-Ala domain, along with tRNA(Ala), serves as a bridge to cooperatively bring together the editing and aminoacylation centers thus stimulating deacylation of misacylated tRNAs.</text>
</comment>
<comment type="similarity">
    <text evidence="1">Belongs to the class-II aminoacyl-tRNA synthetase family.</text>
</comment>
<protein>
    <recommendedName>
        <fullName evidence="1">Alanine--tRNA ligase</fullName>
        <ecNumber evidence="1">6.1.1.7</ecNumber>
    </recommendedName>
    <alternativeName>
        <fullName evidence="1">Alanyl-tRNA synthetase</fullName>
        <shortName evidence="1">AlaRS</shortName>
    </alternativeName>
</protein>
<accession>Q8Z4D5</accession>
<sequence>MSKSTAEIRQAFLDFFHSKGHQVVASSSLVPNNDPTLLFTNAGMNQFKDVFLGLDKRNYSRATTSQRCVRAGGKHNDLENVGYTARHHTFFEMLGNFSFGDYFKHDAIQFAWELLTGENWFALPKERLWVTVYETDDEAYEIWEKEVGIPRERIIRIGDNKGAPYASDNFWQMGDTGPCGPCTEIFYDHGDHIWGGPPGSPEEDGDRYIEIWNIVFMQFNRQADGTMEPLPKPSVDTGMGLERIAAVLQHVNSNYDIDLFRTLIEAVAKVTGSTDLGNKSLRVIADHIRSCAFLVADGVLPSNENRGYVLRRIIRRAVRHGNMLGAKETFFYKLVGPLIEVMGSAGEELKRQQAQVEQVLKTEEEQFARTLERGLALLDEELAKLQGDTLDGETAFRLYDTYGFPVDLTADVCRERNIKVDEAGFEAAMEEQRRRAREASGFGADYNAMIRVDSASEFKGYDHLELNGKVTALFVDGKAVEAINAGQEAVVVLDQTPFYAESGGQVGDKGELKGAGFTFAVDDTQKYGQAIGHLGKLSAGALKVGDAVQADVDEARRARIRLNHSATHLMHAALRQVLGTHVAQKGSLVSDKVLRFDFSHNEAMKPSEIREVEDLVNAQIRRNLPIETNIMDLDAAKAKGAMALFGEKYDERVRVLSMGDFSTELCGGTHASRTGDIGLFRIISESGTAAGIRRIEAVTGEGAMATVHAQSDRLNDIAHLLKGDSQNLGDKVRAVLERTRQLEKELQQLKDQAAAQESANLSSKAVDLNGVKLLVSELAGIEPKMLRTMVDDLKNQLGSTVIVLATVVEGKVSLIAGVSKDVTDRVKAGELIGMVAQQVGGKGGGRPDMAQAGGTDAAALPAALASVQGWVSAKLQ</sequence>